<keyword id="KW-0002">3D-structure</keyword>
<keyword id="KW-1003">Cell membrane</keyword>
<keyword id="KW-0968">Cytoplasmic vesicle</keyword>
<keyword id="KW-0285">Flavoprotein</keyword>
<keyword id="KW-0288">FMN</keyword>
<keyword id="KW-0472">Membrane</keyword>
<keyword id="KW-0521">NADP</keyword>
<keyword id="KW-0560">Oxidoreductase</keyword>
<keyword id="KW-1185">Reference proteome</keyword>
<keyword id="KW-0812">Transmembrane</keyword>
<keyword id="KW-1133">Transmembrane helix</keyword>
<evidence type="ECO:0000250" key="1">
    <source>
        <dbReference type="UniProtKB" id="Q6PHW0"/>
    </source>
</evidence>
<evidence type="ECO:0000255" key="2"/>
<evidence type="ECO:0000269" key="3">
    <source>
    </source>
</evidence>
<evidence type="ECO:0000269" key="4">
    <source>
    </source>
</evidence>
<evidence type="ECO:0000269" key="5">
    <source>
    </source>
</evidence>
<evidence type="ECO:0000303" key="6">
    <source>
    </source>
</evidence>
<evidence type="ECO:0000305" key="7"/>
<evidence type="ECO:0007744" key="8">
    <source>
        <dbReference type="PDB" id="3GB5"/>
    </source>
</evidence>
<evidence type="ECO:0007744" key="9">
    <source>
        <dbReference type="PDB" id="3GFD"/>
    </source>
</evidence>
<evidence type="ECO:0007744" key="10">
    <source>
        <dbReference type="PDB" id="3GH8"/>
    </source>
</evidence>
<evidence type="ECO:0007744" key="11">
    <source>
        <dbReference type="PDB" id="3TNZ"/>
    </source>
</evidence>
<evidence type="ECO:0007744" key="12">
    <source>
        <dbReference type="PDB" id="3TO0"/>
    </source>
</evidence>
<evidence type="ECO:0007829" key="13">
    <source>
        <dbReference type="PDB" id="3GB5"/>
    </source>
</evidence>
<evidence type="ECO:0007829" key="14">
    <source>
        <dbReference type="PDB" id="3GH8"/>
    </source>
</evidence>
<evidence type="ECO:0007829" key="15">
    <source>
        <dbReference type="PDB" id="3TNZ"/>
    </source>
</evidence>
<proteinExistence type="evidence at protein level"/>
<dbReference type="EC" id="1.21.1.1" evidence="4 5"/>
<dbReference type="EMBL" id="AK002363">
    <property type="protein sequence ID" value="BAB22041.1"/>
    <property type="molecule type" value="mRNA"/>
</dbReference>
<dbReference type="EMBL" id="BC023358">
    <property type="protein sequence ID" value="AAH23358.1"/>
    <property type="molecule type" value="mRNA"/>
</dbReference>
<dbReference type="CCDS" id="CCDS56670.1"/>
<dbReference type="RefSeq" id="NP_081667.1">
    <property type="nucleotide sequence ID" value="NM_027391.4"/>
</dbReference>
<dbReference type="PDB" id="3GB5">
    <property type="method" value="X-ray"/>
    <property type="resolution" value="2.00 A"/>
    <property type="chains" value="A=34-285"/>
</dbReference>
<dbReference type="PDB" id="3GFD">
    <property type="method" value="X-ray"/>
    <property type="resolution" value="2.45 A"/>
    <property type="chains" value="A/B=34-285"/>
</dbReference>
<dbReference type="PDB" id="3GH8">
    <property type="method" value="X-ray"/>
    <property type="resolution" value="2.61 A"/>
    <property type="chains" value="A/B/C/D/E/F/G/H=34-285"/>
</dbReference>
<dbReference type="PDB" id="3TNZ">
    <property type="method" value="X-ray"/>
    <property type="resolution" value="2.25 A"/>
    <property type="chains" value="A/B=34-285"/>
</dbReference>
<dbReference type="PDB" id="3TO0">
    <property type="method" value="X-ray"/>
    <property type="resolution" value="2.66 A"/>
    <property type="chains" value="A/B=34-285"/>
</dbReference>
<dbReference type="PDBsum" id="3GB5"/>
<dbReference type="PDBsum" id="3GFD"/>
<dbReference type="PDBsum" id="3GH8"/>
<dbReference type="PDBsum" id="3TNZ"/>
<dbReference type="PDBsum" id="3TO0"/>
<dbReference type="SMR" id="Q9DCX8"/>
<dbReference type="FunCoup" id="Q9DCX8">
    <property type="interactions" value="19"/>
</dbReference>
<dbReference type="STRING" id="10090.ENSMUSP00000019896"/>
<dbReference type="iPTMnet" id="Q9DCX8"/>
<dbReference type="PhosphoSitePlus" id="Q9DCX8"/>
<dbReference type="SwissPalm" id="Q9DCX8"/>
<dbReference type="jPOST" id="Q9DCX8"/>
<dbReference type="PaxDb" id="10090-ENSMUSP00000019896"/>
<dbReference type="PeptideAtlas" id="Q9DCX8"/>
<dbReference type="ProteomicsDB" id="269023"/>
<dbReference type="Antibodypedia" id="33325">
    <property type="antibodies" value="62 antibodies from 19 providers"/>
</dbReference>
<dbReference type="DNASU" id="70337"/>
<dbReference type="Ensembl" id="ENSMUST00000019896.5">
    <property type="protein sequence ID" value="ENSMUSP00000019896.5"/>
    <property type="gene ID" value="ENSMUSG00000019762.5"/>
</dbReference>
<dbReference type="GeneID" id="70337"/>
<dbReference type="KEGG" id="mmu:70337"/>
<dbReference type="UCSC" id="uc007ehp.1">
    <property type="organism name" value="mouse"/>
</dbReference>
<dbReference type="AGR" id="MGI:1917587"/>
<dbReference type="CTD" id="389434"/>
<dbReference type="MGI" id="MGI:1917587">
    <property type="gene designation" value="Iyd"/>
</dbReference>
<dbReference type="VEuPathDB" id="HostDB:ENSMUSG00000019762"/>
<dbReference type="eggNOG" id="KOG3936">
    <property type="taxonomic scope" value="Eukaryota"/>
</dbReference>
<dbReference type="GeneTree" id="ENSGT00390000004348"/>
<dbReference type="HOGENOM" id="CLU_070764_1_0_1"/>
<dbReference type="InParanoid" id="Q9DCX8"/>
<dbReference type="OMA" id="GANHQPW"/>
<dbReference type="OrthoDB" id="41362at2759"/>
<dbReference type="PhylomeDB" id="Q9DCX8"/>
<dbReference type="TreeFam" id="TF313415"/>
<dbReference type="BRENDA" id="1.21.1.1">
    <property type="organism ID" value="3474"/>
</dbReference>
<dbReference type="Reactome" id="R-MMU-209968">
    <property type="pathway name" value="Thyroxine biosynthesis"/>
</dbReference>
<dbReference type="BioGRID-ORCS" id="70337">
    <property type="hits" value="0 hits in 78 CRISPR screens"/>
</dbReference>
<dbReference type="ChiTaRS" id="Iyd">
    <property type="organism name" value="mouse"/>
</dbReference>
<dbReference type="EvolutionaryTrace" id="Q9DCX8"/>
<dbReference type="PRO" id="PR:Q9DCX8"/>
<dbReference type="Proteomes" id="UP000000589">
    <property type="component" value="Chromosome 10"/>
</dbReference>
<dbReference type="RNAct" id="Q9DCX8">
    <property type="molecule type" value="protein"/>
</dbReference>
<dbReference type="Bgee" id="ENSMUSG00000019762">
    <property type="expression patterns" value="Expressed in left lobe of liver and 56 other cell types or tissues"/>
</dbReference>
<dbReference type="GO" id="GO:0030659">
    <property type="term" value="C:cytoplasmic vesicle membrane"/>
    <property type="evidence" value="ECO:0000250"/>
    <property type="project" value="UniProtKB"/>
</dbReference>
<dbReference type="GO" id="GO:0005654">
    <property type="term" value="C:nucleoplasm"/>
    <property type="evidence" value="ECO:0007669"/>
    <property type="project" value="Ensembl"/>
</dbReference>
<dbReference type="GO" id="GO:0005886">
    <property type="term" value="C:plasma membrane"/>
    <property type="evidence" value="ECO:0000250"/>
    <property type="project" value="UniProtKB"/>
</dbReference>
<dbReference type="GO" id="GO:0010181">
    <property type="term" value="F:FMN binding"/>
    <property type="evidence" value="ECO:0000314"/>
    <property type="project" value="UniProtKB"/>
</dbReference>
<dbReference type="GO" id="GO:0140616">
    <property type="term" value="F:iodotyrosine deiodinase activity"/>
    <property type="evidence" value="ECO:0000314"/>
    <property type="project" value="UniProtKB"/>
</dbReference>
<dbReference type="GO" id="GO:0042403">
    <property type="term" value="P:thyroid hormone metabolic process"/>
    <property type="evidence" value="ECO:0000250"/>
    <property type="project" value="UniProtKB"/>
</dbReference>
<dbReference type="GO" id="GO:0006570">
    <property type="term" value="P:tyrosine metabolic process"/>
    <property type="evidence" value="ECO:0000314"/>
    <property type="project" value="UniProtKB"/>
</dbReference>
<dbReference type="CDD" id="cd02144">
    <property type="entry name" value="iodotyrosine_dehalogenase"/>
    <property type="match status" value="1"/>
</dbReference>
<dbReference type="FunFam" id="3.40.109.10:FF:000004">
    <property type="entry name" value="Iodotyrosine deiodinase 1"/>
    <property type="match status" value="1"/>
</dbReference>
<dbReference type="Gene3D" id="3.40.109.10">
    <property type="entry name" value="NADH Oxidase"/>
    <property type="match status" value="1"/>
</dbReference>
<dbReference type="InterPro" id="IPR029479">
    <property type="entry name" value="Nitroreductase"/>
</dbReference>
<dbReference type="InterPro" id="IPR000415">
    <property type="entry name" value="Nitroreductase-like"/>
</dbReference>
<dbReference type="InterPro" id="IPR050627">
    <property type="entry name" value="Nitroreductase/BluB"/>
</dbReference>
<dbReference type="PANTHER" id="PTHR23026:SF90">
    <property type="entry name" value="IODOTYROSINE DEIODINASE 1"/>
    <property type="match status" value="1"/>
</dbReference>
<dbReference type="PANTHER" id="PTHR23026">
    <property type="entry name" value="NADPH NITROREDUCTASE"/>
    <property type="match status" value="1"/>
</dbReference>
<dbReference type="Pfam" id="PF00881">
    <property type="entry name" value="Nitroreductase"/>
    <property type="match status" value="1"/>
</dbReference>
<dbReference type="SUPFAM" id="SSF55469">
    <property type="entry name" value="FMN-dependent nitroreductase-like"/>
    <property type="match status" value="1"/>
</dbReference>
<comment type="function">
    <text evidence="1 5">Catalyzes the dehalogenation of halotyrosines such as 3-bromo-L-tyrosine, 3-chloro-L-tyrosine, 3-iodo-L-tyrosine and 3,5-diiodo-L-tyrosine (By similarity). During thyroid hormone biosynthesis, facilitates iodide salvage by catalysing the oxidative NADPH-dependent deiodination of the halogenated by-products of thyroid hormone production, monoiodotyrosine (L-MIT) and diiodotyrosine (L-DIT) (PubMed:22238141). The scavanged iodide can then reenter the hormone-producing pathways (By similarity). Acts more efficiently on 3-iodo-L-tyrosine than 3,5-diiodo-L-tyrosine (By similarity).</text>
</comment>
<comment type="catalytic activity">
    <reaction evidence="5">
        <text>2 iodide + L-tyrosine + 2 NADP(+) = 3,5-diiodo-L-tyrosine + 2 NADPH + H(+)</text>
        <dbReference type="Rhea" id="RHEA:32479"/>
        <dbReference type="ChEBI" id="CHEBI:15378"/>
        <dbReference type="ChEBI" id="CHEBI:16382"/>
        <dbReference type="ChEBI" id="CHEBI:57506"/>
        <dbReference type="ChEBI" id="CHEBI:57783"/>
        <dbReference type="ChEBI" id="CHEBI:58315"/>
        <dbReference type="ChEBI" id="CHEBI:58349"/>
        <dbReference type="EC" id="1.21.1.1"/>
    </reaction>
    <physiologicalReaction direction="right-to-left" evidence="5">
        <dbReference type="Rhea" id="RHEA:32481"/>
    </physiologicalReaction>
</comment>
<comment type="catalytic activity">
    <reaction evidence="5">
        <text>iodide + L-tyrosine + NADP(+) = 3-iodo-L-tyrosine + NADPH</text>
        <dbReference type="Rhea" id="RHEA:27453"/>
        <dbReference type="ChEBI" id="CHEBI:16382"/>
        <dbReference type="ChEBI" id="CHEBI:57783"/>
        <dbReference type="ChEBI" id="CHEBI:58315"/>
        <dbReference type="ChEBI" id="CHEBI:58349"/>
        <dbReference type="ChEBI" id="CHEBI:59898"/>
    </reaction>
    <physiologicalReaction direction="right-to-left" evidence="5">
        <dbReference type="Rhea" id="RHEA:27455"/>
    </physiologicalReaction>
</comment>
<comment type="catalytic activity">
    <reaction evidence="5">
        <text>3-iodo-L-tyrosine + iodide + NADP(+) = 3,5-diiodo-L-tyrosine + NADPH + H(+)</text>
        <dbReference type="Rhea" id="RHEA:27457"/>
        <dbReference type="ChEBI" id="CHEBI:15378"/>
        <dbReference type="ChEBI" id="CHEBI:16382"/>
        <dbReference type="ChEBI" id="CHEBI:57506"/>
        <dbReference type="ChEBI" id="CHEBI:57783"/>
        <dbReference type="ChEBI" id="CHEBI:58349"/>
        <dbReference type="ChEBI" id="CHEBI:59898"/>
    </reaction>
    <physiologicalReaction direction="right-to-left" evidence="5">
        <dbReference type="Rhea" id="RHEA:27459"/>
    </physiologicalReaction>
</comment>
<comment type="catalytic activity">
    <reaction evidence="4">
        <text>L-tyrosine + chloride + NADP(+) = 3-chloro-L-tyrosine + NADPH</text>
        <dbReference type="Rhea" id="RHEA:70343"/>
        <dbReference type="ChEBI" id="CHEBI:17996"/>
        <dbReference type="ChEBI" id="CHEBI:57783"/>
        <dbReference type="ChEBI" id="CHEBI:58315"/>
        <dbReference type="ChEBI" id="CHEBI:58349"/>
        <dbReference type="ChEBI" id="CHEBI:189422"/>
    </reaction>
    <physiologicalReaction direction="right-to-left" evidence="4">
        <dbReference type="Rhea" id="RHEA:70345"/>
    </physiologicalReaction>
</comment>
<comment type="catalytic activity">
    <reaction evidence="4">
        <text>bromide + L-tyrosine + NADP(+) = 3-bromo-L-tyrosine + NADPH</text>
        <dbReference type="Rhea" id="RHEA:70347"/>
        <dbReference type="ChEBI" id="CHEBI:15858"/>
        <dbReference type="ChEBI" id="CHEBI:57783"/>
        <dbReference type="ChEBI" id="CHEBI:58315"/>
        <dbReference type="ChEBI" id="CHEBI:58349"/>
        <dbReference type="ChEBI" id="CHEBI:189423"/>
    </reaction>
    <physiologicalReaction direction="right-to-left" evidence="4">
        <dbReference type="Rhea" id="RHEA:70349"/>
    </physiologicalReaction>
</comment>
<comment type="cofactor">
    <cofactor evidence="3 4 5">
        <name>FMN</name>
        <dbReference type="ChEBI" id="CHEBI:58210"/>
    </cofactor>
</comment>
<comment type="subunit">
    <text evidence="3 5">Homodimer.</text>
</comment>
<comment type="subcellular location">
    <subcellularLocation>
        <location evidence="1">Cell membrane</location>
        <topology evidence="1">Single-pass membrane protein</topology>
    </subcellularLocation>
    <subcellularLocation>
        <location evidence="1">Cytoplasmic vesicle membrane</location>
    </subcellularLocation>
</comment>
<comment type="similarity">
    <text evidence="7">Belongs to the nitroreductase family.</text>
</comment>
<protein>
    <recommendedName>
        <fullName evidence="6">Iodotyrosine deiodinase 1</fullName>
        <shortName evidence="6">IYD-1</shortName>
        <ecNumber evidence="4 5">1.21.1.1</ecNumber>
    </recommendedName>
    <alternativeName>
        <fullName evidence="1">Iodotyrosine dehalogenase 1</fullName>
    </alternativeName>
</protein>
<reference key="1">
    <citation type="journal article" date="2005" name="Science">
        <title>The transcriptional landscape of the mammalian genome.</title>
        <authorList>
            <person name="Carninci P."/>
            <person name="Kasukawa T."/>
            <person name="Katayama S."/>
            <person name="Gough J."/>
            <person name="Frith M.C."/>
            <person name="Maeda N."/>
            <person name="Oyama R."/>
            <person name="Ravasi T."/>
            <person name="Lenhard B."/>
            <person name="Wells C."/>
            <person name="Kodzius R."/>
            <person name="Shimokawa K."/>
            <person name="Bajic V.B."/>
            <person name="Brenner S.E."/>
            <person name="Batalov S."/>
            <person name="Forrest A.R."/>
            <person name="Zavolan M."/>
            <person name="Davis M.J."/>
            <person name="Wilming L.G."/>
            <person name="Aidinis V."/>
            <person name="Allen J.E."/>
            <person name="Ambesi-Impiombato A."/>
            <person name="Apweiler R."/>
            <person name="Aturaliya R.N."/>
            <person name="Bailey T.L."/>
            <person name="Bansal M."/>
            <person name="Baxter L."/>
            <person name="Beisel K.W."/>
            <person name="Bersano T."/>
            <person name="Bono H."/>
            <person name="Chalk A.M."/>
            <person name="Chiu K.P."/>
            <person name="Choudhary V."/>
            <person name="Christoffels A."/>
            <person name="Clutterbuck D.R."/>
            <person name="Crowe M.L."/>
            <person name="Dalla E."/>
            <person name="Dalrymple B.P."/>
            <person name="de Bono B."/>
            <person name="Della Gatta G."/>
            <person name="di Bernardo D."/>
            <person name="Down T."/>
            <person name="Engstrom P."/>
            <person name="Fagiolini M."/>
            <person name="Faulkner G."/>
            <person name="Fletcher C.F."/>
            <person name="Fukushima T."/>
            <person name="Furuno M."/>
            <person name="Futaki S."/>
            <person name="Gariboldi M."/>
            <person name="Georgii-Hemming P."/>
            <person name="Gingeras T.R."/>
            <person name="Gojobori T."/>
            <person name="Green R.E."/>
            <person name="Gustincich S."/>
            <person name="Harbers M."/>
            <person name="Hayashi Y."/>
            <person name="Hensch T.K."/>
            <person name="Hirokawa N."/>
            <person name="Hill D."/>
            <person name="Huminiecki L."/>
            <person name="Iacono M."/>
            <person name="Ikeo K."/>
            <person name="Iwama A."/>
            <person name="Ishikawa T."/>
            <person name="Jakt M."/>
            <person name="Kanapin A."/>
            <person name="Katoh M."/>
            <person name="Kawasawa Y."/>
            <person name="Kelso J."/>
            <person name="Kitamura H."/>
            <person name="Kitano H."/>
            <person name="Kollias G."/>
            <person name="Krishnan S.P."/>
            <person name="Kruger A."/>
            <person name="Kummerfeld S.K."/>
            <person name="Kurochkin I.V."/>
            <person name="Lareau L.F."/>
            <person name="Lazarevic D."/>
            <person name="Lipovich L."/>
            <person name="Liu J."/>
            <person name="Liuni S."/>
            <person name="McWilliam S."/>
            <person name="Madan Babu M."/>
            <person name="Madera M."/>
            <person name="Marchionni L."/>
            <person name="Matsuda H."/>
            <person name="Matsuzawa S."/>
            <person name="Miki H."/>
            <person name="Mignone F."/>
            <person name="Miyake S."/>
            <person name="Morris K."/>
            <person name="Mottagui-Tabar S."/>
            <person name="Mulder N."/>
            <person name="Nakano N."/>
            <person name="Nakauchi H."/>
            <person name="Ng P."/>
            <person name="Nilsson R."/>
            <person name="Nishiguchi S."/>
            <person name="Nishikawa S."/>
            <person name="Nori F."/>
            <person name="Ohara O."/>
            <person name="Okazaki Y."/>
            <person name="Orlando V."/>
            <person name="Pang K.C."/>
            <person name="Pavan W.J."/>
            <person name="Pavesi G."/>
            <person name="Pesole G."/>
            <person name="Petrovsky N."/>
            <person name="Piazza S."/>
            <person name="Reed J."/>
            <person name="Reid J.F."/>
            <person name="Ring B.Z."/>
            <person name="Ringwald M."/>
            <person name="Rost B."/>
            <person name="Ruan Y."/>
            <person name="Salzberg S.L."/>
            <person name="Sandelin A."/>
            <person name="Schneider C."/>
            <person name="Schoenbach C."/>
            <person name="Sekiguchi K."/>
            <person name="Semple C.A."/>
            <person name="Seno S."/>
            <person name="Sessa L."/>
            <person name="Sheng Y."/>
            <person name="Shibata Y."/>
            <person name="Shimada H."/>
            <person name="Shimada K."/>
            <person name="Silva D."/>
            <person name="Sinclair B."/>
            <person name="Sperling S."/>
            <person name="Stupka E."/>
            <person name="Sugiura K."/>
            <person name="Sultana R."/>
            <person name="Takenaka Y."/>
            <person name="Taki K."/>
            <person name="Tammoja K."/>
            <person name="Tan S.L."/>
            <person name="Tang S."/>
            <person name="Taylor M.S."/>
            <person name="Tegner J."/>
            <person name="Teichmann S.A."/>
            <person name="Ueda H.R."/>
            <person name="van Nimwegen E."/>
            <person name="Verardo R."/>
            <person name="Wei C.L."/>
            <person name="Yagi K."/>
            <person name="Yamanishi H."/>
            <person name="Zabarovsky E."/>
            <person name="Zhu S."/>
            <person name="Zimmer A."/>
            <person name="Hide W."/>
            <person name="Bult C."/>
            <person name="Grimmond S.M."/>
            <person name="Teasdale R.D."/>
            <person name="Liu E.T."/>
            <person name="Brusic V."/>
            <person name="Quackenbush J."/>
            <person name="Wahlestedt C."/>
            <person name="Mattick J.S."/>
            <person name="Hume D.A."/>
            <person name="Kai C."/>
            <person name="Sasaki D."/>
            <person name="Tomaru Y."/>
            <person name="Fukuda S."/>
            <person name="Kanamori-Katayama M."/>
            <person name="Suzuki M."/>
            <person name="Aoki J."/>
            <person name="Arakawa T."/>
            <person name="Iida J."/>
            <person name="Imamura K."/>
            <person name="Itoh M."/>
            <person name="Kato T."/>
            <person name="Kawaji H."/>
            <person name="Kawagashira N."/>
            <person name="Kawashima T."/>
            <person name="Kojima M."/>
            <person name="Kondo S."/>
            <person name="Konno H."/>
            <person name="Nakano K."/>
            <person name="Ninomiya N."/>
            <person name="Nishio T."/>
            <person name="Okada M."/>
            <person name="Plessy C."/>
            <person name="Shibata K."/>
            <person name="Shiraki T."/>
            <person name="Suzuki S."/>
            <person name="Tagami M."/>
            <person name="Waki K."/>
            <person name="Watahiki A."/>
            <person name="Okamura-Oho Y."/>
            <person name="Suzuki H."/>
            <person name="Kawai J."/>
            <person name="Hayashizaki Y."/>
        </authorList>
    </citation>
    <scope>NUCLEOTIDE SEQUENCE [LARGE SCALE MRNA]</scope>
    <source>
        <strain>C57BL/6J</strain>
        <tissue>Kidney</tissue>
    </source>
</reference>
<reference key="2">
    <citation type="journal article" date="2004" name="Genome Res.">
        <title>The status, quality, and expansion of the NIH full-length cDNA project: the Mammalian Gene Collection (MGC).</title>
        <authorList>
            <consortium name="The MGC Project Team"/>
        </authorList>
    </citation>
    <scope>NUCLEOTIDE SEQUENCE [LARGE SCALE MRNA]</scope>
    <source>
        <strain>FVB/N</strain>
        <tissue>Kidney</tissue>
    </source>
</reference>
<reference key="3">
    <citation type="journal article" date="2010" name="Cell">
        <title>A tissue-specific atlas of mouse protein phosphorylation and expression.</title>
        <authorList>
            <person name="Huttlin E.L."/>
            <person name="Jedrychowski M.P."/>
            <person name="Elias J.E."/>
            <person name="Goswami T."/>
            <person name="Rad R."/>
            <person name="Beausoleil S.A."/>
            <person name="Villen J."/>
            <person name="Haas W."/>
            <person name="Sowa M.E."/>
            <person name="Gygi S.P."/>
        </authorList>
    </citation>
    <scope>IDENTIFICATION BY MASS SPECTROMETRY [LARGE SCALE ANALYSIS]</scope>
    <source>
        <tissue>Kidney</tissue>
        <tissue>Liver</tissue>
        <tissue>Lung</tissue>
        <tissue>Pancreas</tissue>
    </source>
</reference>
<reference key="4">
    <citation type="journal article" date="2009" name="J. Am. Chem. Soc.">
        <title>A mammalian reductive deiodinase has broad power to dehalogenate chlorinated and brominated substrates.</title>
        <authorList>
            <person name="McTamney P.M."/>
            <person name="Rokita S.E."/>
        </authorList>
    </citation>
    <scope>FUNCTION</scope>
    <scope>CATALYTIC ACTIVITY</scope>
    <scope>COFACTOR</scope>
</reference>
<reference key="5">
    <citation type="journal article" date="2009" name="J. Biol. Chem.">
        <title>Crystal structure of iodotyrosine deiodinase, a novel flavoprotein responsible for iodide salvage in thyroid glands.</title>
        <authorList>
            <person name="Thomas S.R."/>
            <person name="McTamney P.M."/>
            <person name="Adler J.M."/>
            <person name="Laronde-Leblanc N."/>
            <person name="Rokita S.E."/>
        </authorList>
    </citation>
    <scope>X-RAY CRYSTALLOGRAPHY (2.0 ANGSTROMS) OF 34-285 IN COMPLEXES WITH 3,5-DIIODOTYROSINE; 3-IODO-TYROSINE AND FMN</scope>
    <scope>SUBUNIT</scope>
    <scope>COFACTOR</scope>
</reference>
<reference key="6">
    <citation type="journal article" date="2012" name="Protein Sci.">
        <title>Expression of a soluble form of iodotyrosine deiodinase for active site characterization by engineering the native membrane protein from Mus musculus.</title>
        <authorList>
            <person name="Buss J.M."/>
            <person name="McTamney P.M."/>
            <person name="Rokita S.E."/>
        </authorList>
    </citation>
    <scope>X-RAY CRYSTALLOGRAPHY (2.25 ANGSTROMS) OF 34-285 IN COMPLEX WITH 3-IODO-L-TYROSINE AND FMN</scope>
    <scope>FUNCTION</scope>
    <scope>COFACTOR</scope>
    <scope>CATALYTIC ACTIVITY</scope>
    <scope>SUBUNIT</scope>
    <scope>MUTAGENESIS OF GLU-153</scope>
</reference>
<name>IYD1_MOUSE</name>
<sequence length="285" mass="32814">MFLLTPVLVAVVCILVVWVFKNADRNLEKKKEEAQVQPWVDEDLKDSTEDLQVEEDAEEWQEAEESVEHIPFSHTRYPEQEMRMRSQEFYELLNKRRSVRFISSEHVPMEVIENVIKAAGTAPSGAHTEPWTFVVVKDPDMKHKIREIIEEEEEINYMKRMGKRWVTDLKKLRTNWIKEYLDTAPVLILIFKQVHGFAANGKKKVHYYNEISVSIACGLLLAALQNAGLVTVTTTPLNCGPRLRVLLGRPSHEKLLVLLPVGYPSRDATVPDLKRKALDQIMVTV</sequence>
<feature type="chain" id="PRO_0000230279" description="Iodotyrosine deiodinase 1">
    <location>
        <begin position="1"/>
        <end position="285"/>
    </location>
</feature>
<feature type="transmembrane region" description="Helical" evidence="2">
    <location>
        <begin position="1"/>
        <end position="21"/>
    </location>
</feature>
<feature type="binding site" evidence="3 5 8 9 10 11 12">
    <location>
        <begin position="96"/>
        <end position="100"/>
    </location>
    <ligand>
        <name>FMN</name>
        <dbReference type="ChEBI" id="CHEBI:58210"/>
    </ligand>
</feature>
<feature type="binding site" evidence="3 5 8 9 10 11 12">
    <location>
        <begin position="124"/>
        <end position="125"/>
    </location>
    <ligand>
        <name>FMN</name>
        <dbReference type="ChEBI" id="CHEBI:58210"/>
    </ligand>
</feature>
<feature type="binding site" evidence="10">
    <location>
        <position position="126"/>
    </location>
    <ligand>
        <name>3,5-diiodo-L-tyrosine</name>
        <dbReference type="ChEBI" id="CHEBI:57506"/>
    </ligand>
</feature>
<feature type="binding site" evidence="9 11">
    <location>
        <position position="126"/>
    </location>
    <ligand>
        <name>3-iodo-L-tyrosine</name>
        <dbReference type="ChEBI" id="CHEBI:59898"/>
    </ligand>
</feature>
<feature type="binding site" evidence="3 10">
    <location>
        <position position="153"/>
    </location>
    <ligand>
        <name>3,5-diiodo-L-tyrosine</name>
        <dbReference type="ChEBI" id="CHEBI:57506"/>
    </ligand>
</feature>
<feature type="binding site" evidence="3 5 9 11">
    <location>
        <position position="153"/>
    </location>
    <ligand>
        <name>3-iodo-L-tyrosine</name>
        <dbReference type="ChEBI" id="CHEBI:59898"/>
    </ligand>
</feature>
<feature type="binding site" evidence="3 10">
    <location>
        <position position="157"/>
    </location>
    <ligand>
        <name>3,5-diiodo-L-tyrosine</name>
        <dbReference type="ChEBI" id="CHEBI:57506"/>
    </ligand>
</feature>
<feature type="binding site" evidence="3 5 9 11">
    <location>
        <position position="157"/>
    </location>
    <ligand>
        <name>3-iodo-L-tyrosine</name>
        <dbReference type="ChEBI" id="CHEBI:59898"/>
    </ligand>
</feature>
<feature type="binding site" evidence="3 10">
    <location>
        <position position="178"/>
    </location>
    <ligand>
        <name>3,5-diiodo-L-tyrosine</name>
        <dbReference type="ChEBI" id="CHEBI:57506"/>
    </ligand>
</feature>
<feature type="binding site" evidence="3 5 9 11">
    <location>
        <position position="178"/>
    </location>
    <ligand>
        <name>3-iodo-L-tyrosine</name>
        <dbReference type="ChEBI" id="CHEBI:59898"/>
    </ligand>
</feature>
<feature type="binding site" evidence="3 5 8 9 10 11 12">
    <location>
        <begin position="233"/>
        <end position="235"/>
    </location>
    <ligand>
        <name>FMN</name>
        <dbReference type="ChEBI" id="CHEBI:58210"/>
    </ligand>
</feature>
<feature type="binding site" evidence="3 5 8 9 10 11 12">
    <location>
        <position position="275"/>
    </location>
    <ligand>
        <name>FMN</name>
        <dbReference type="ChEBI" id="CHEBI:58210"/>
    </ligand>
</feature>
<feature type="mutagenesis site" description="Loss of enzyme activity." evidence="5">
    <original>E</original>
    <variation>Q</variation>
    <location>
        <position position="153"/>
    </location>
</feature>
<feature type="strand" evidence="15">
    <location>
        <begin position="69"/>
        <end position="71"/>
    </location>
</feature>
<feature type="helix" evidence="13">
    <location>
        <begin position="79"/>
        <end position="94"/>
    </location>
</feature>
<feature type="helix" evidence="13">
    <location>
        <begin position="109"/>
        <end position="119"/>
    </location>
</feature>
<feature type="helix" evidence="13">
    <location>
        <begin position="125"/>
        <end position="127"/>
    </location>
</feature>
<feature type="strand" evidence="13">
    <location>
        <begin position="131"/>
        <end position="136"/>
    </location>
</feature>
<feature type="helix" evidence="13">
    <location>
        <begin position="139"/>
        <end position="151"/>
    </location>
</feature>
<feature type="turn" evidence="14">
    <location>
        <begin position="159"/>
        <end position="161"/>
    </location>
</feature>
<feature type="helix" evidence="15">
    <location>
        <begin position="163"/>
        <end position="169"/>
    </location>
</feature>
<feature type="helix" evidence="15">
    <location>
        <begin position="170"/>
        <end position="172"/>
    </location>
</feature>
<feature type="helix" evidence="13">
    <location>
        <begin position="180"/>
        <end position="183"/>
    </location>
</feature>
<feature type="strand" evidence="13">
    <location>
        <begin position="184"/>
        <end position="193"/>
    </location>
</feature>
<feature type="strand" evidence="15">
    <location>
        <begin position="203"/>
        <end position="205"/>
    </location>
</feature>
<feature type="helix" evidence="13">
    <location>
        <begin position="209"/>
        <end position="226"/>
    </location>
</feature>
<feature type="helix" evidence="13">
    <location>
        <begin position="237"/>
        <end position="239"/>
    </location>
</feature>
<feature type="helix" evidence="13">
    <location>
        <begin position="240"/>
        <end position="246"/>
    </location>
</feature>
<feature type="strand" evidence="13">
    <location>
        <begin position="253"/>
        <end position="262"/>
    </location>
</feature>
<feature type="strand" evidence="15">
    <location>
        <begin position="269"/>
        <end position="271"/>
    </location>
</feature>
<feature type="helix" evidence="13">
    <location>
        <begin position="278"/>
        <end position="280"/>
    </location>
</feature>
<feature type="strand" evidence="15">
    <location>
        <begin position="282"/>
        <end position="284"/>
    </location>
</feature>
<accession>Q9DCX8</accession>
<gene>
    <name type="primary">Iyd</name>
    <name type="synonym">Dehal1</name>
</gene>
<organism>
    <name type="scientific">Mus musculus</name>
    <name type="common">Mouse</name>
    <dbReference type="NCBI Taxonomy" id="10090"/>
    <lineage>
        <taxon>Eukaryota</taxon>
        <taxon>Metazoa</taxon>
        <taxon>Chordata</taxon>
        <taxon>Craniata</taxon>
        <taxon>Vertebrata</taxon>
        <taxon>Euteleostomi</taxon>
        <taxon>Mammalia</taxon>
        <taxon>Eutheria</taxon>
        <taxon>Euarchontoglires</taxon>
        <taxon>Glires</taxon>
        <taxon>Rodentia</taxon>
        <taxon>Myomorpha</taxon>
        <taxon>Muroidea</taxon>
        <taxon>Muridae</taxon>
        <taxon>Murinae</taxon>
        <taxon>Mus</taxon>
        <taxon>Mus</taxon>
    </lineage>
</organism>